<gene>
    <name evidence="10" type="primary">ANKRD26</name>
    <name type="synonym">KIAA1074</name>
</gene>
<dbReference type="EMBL" id="AB028997">
    <property type="protein sequence ID" value="BAA83026.2"/>
    <property type="status" value="ALT_INIT"/>
    <property type="molecule type" value="mRNA"/>
</dbReference>
<dbReference type="EMBL" id="AL162272">
    <property type="status" value="NOT_ANNOTATED_CDS"/>
    <property type="molecule type" value="Genomic_DNA"/>
</dbReference>
<dbReference type="EMBL" id="AK001137">
    <property type="protein sequence ID" value="BAA91516.1"/>
    <property type="molecule type" value="mRNA"/>
</dbReference>
<dbReference type="EMBL" id="AK128577">
    <property type="protein sequence ID" value="BAC87508.1"/>
    <property type="molecule type" value="mRNA"/>
</dbReference>
<dbReference type="EMBL" id="AL137351">
    <property type="protein sequence ID" value="CAB70706.1"/>
    <property type="molecule type" value="mRNA"/>
</dbReference>
<dbReference type="EMBL" id="AL162063">
    <property type="protein sequence ID" value="CAB82401.1"/>
    <property type="molecule type" value="mRNA"/>
</dbReference>
<dbReference type="EMBL" id="BC110646">
    <property type="protein sequence ID" value="AAI10647.1"/>
    <property type="molecule type" value="mRNA"/>
</dbReference>
<dbReference type="CCDS" id="CCDS41499.1">
    <molecule id="Q9UPS8-1"/>
</dbReference>
<dbReference type="PIR" id="T46425">
    <property type="entry name" value="T46425"/>
</dbReference>
<dbReference type="PIR" id="T47167">
    <property type="entry name" value="T47167"/>
</dbReference>
<dbReference type="RefSeq" id="NP_001242982.1">
    <property type="nucleotide sequence ID" value="NM_001256053.1"/>
</dbReference>
<dbReference type="RefSeq" id="NP_055730.2">
    <molecule id="Q9UPS8-1"/>
    <property type="nucleotide sequence ID" value="NM_014915.3"/>
</dbReference>
<dbReference type="SMR" id="Q9UPS8"/>
<dbReference type="BioGRID" id="116523">
    <property type="interactions" value="133"/>
</dbReference>
<dbReference type="FunCoup" id="Q9UPS8">
    <property type="interactions" value="645"/>
</dbReference>
<dbReference type="IntAct" id="Q9UPS8">
    <property type="interactions" value="53"/>
</dbReference>
<dbReference type="MINT" id="Q9UPS8"/>
<dbReference type="STRING" id="9606.ENSP00000365255"/>
<dbReference type="GlyGen" id="Q9UPS8">
    <property type="glycosylation" value="3 sites, 1 O-linked glycan (3 sites)"/>
</dbReference>
<dbReference type="iPTMnet" id="Q9UPS8"/>
<dbReference type="PhosphoSitePlus" id="Q9UPS8"/>
<dbReference type="SwissPalm" id="Q9UPS8"/>
<dbReference type="BioMuta" id="ANKRD26"/>
<dbReference type="DMDM" id="109940217"/>
<dbReference type="jPOST" id="Q9UPS8"/>
<dbReference type="MassIVE" id="Q9UPS8"/>
<dbReference type="PaxDb" id="9606-ENSP00000365255"/>
<dbReference type="PeptideAtlas" id="Q9UPS8"/>
<dbReference type="ProteomicsDB" id="85431">
    <molecule id="Q9UPS8-1"/>
</dbReference>
<dbReference type="ProteomicsDB" id="85432">
    <molecule id="Q9UPS8-2"/>
</dbReference>
<dbReference type="Pumba" id="Q9UPS8"/>
<dbReference type="Antibodypedia" id="25959">
    <property type="antibodies" value="123 antibodies from 25 providers"/>
</dbReference>
<dbReference type="DNASU" id="22852"/>
<dbReference type="Ensembl" id="ENST00000376087.5">
    <molecule id="Q9UPS8-1"/>
    <property type="protein sequence ID" value="ENSP00000365255.4"/>
    <property type="gene ID" value="ENSG00000107890.17"/>
</dbReference>
<dbReference type="GeneID" id="22852"/>
<dbReference type="KEGG" id="hsa:22852"/>
<dbReference type="MANE-Select" id="ENST00000376087.5">
    <property type="protein sequence ID" value="ENSP00000365255.4"/>
    <property type="RefSeq nucleotide sequence ID" value="NM_014915.3"/>
    <property type="RefSeq protein sequence ID" value="NP_055730.2"/>
</dbReference>
<dbReference type="UCSC" id="uc009xku.2">
    <molecule id="Q9UPS8-1"/>
    <property type="organism name" value="human"/>
</dbReference>
<dbReference type="AGR" id="HGNC:29186"/>
<dbReference type="CTD" id="22852"/>
<dbReference type="DisGeNET" id="22852"/>
<dbReference type="GeneCards" id="ANKRD26"/>
<dbReference type="GeneReviews" id="ANKRD26"/>
<dbReference type="HGNC" id="HGNC:29186">
    <property type="gene designation" value="ANKRD26"/>
</dbReference>
<dbReference type="HPA" id="ENSG00000107890">
    <property type="expression patterns" value="Low tissue specificity"/>
</dbReference>
<dbReference type="MalaCards" id="ANKRD26"/>
<dbReference type="MIM" id="188000">
    <property type="type" value="phenotype"/>
</dbReference>
<dbReference type="MIM" id="610855">
    <property type="type" value="gene"/>
</dbReference>
<dbReference type="neXtProt" id="NX_Q9UPS8"/>
<dbReference type="OpenTargets" id="ENSG00000107890"/>
<dbReference type="Orphanet" id="168629">
    <property type="disease" value="Autosomal thrombocytopenia with normal platelets"/>
</dbReference>
<dbReference type="PharmGKB" id="PA134926710"/>
<dbReference type="VEuPathDB" id="HostDB:ENSG00000107890"/>
<dbReference type="eggNOG" id="ENOG502QR0R">
    <property type="taxonomic scope" value="Eukaryota"/>
</dbReference>
<dbReference type="GeneTree" id="ENSGT00940000162459"/>
<dbReference type="HOGENOM" id="CLU_001111_0_0_1"/>
<dbReference type="InParanoid" id="Q9UPS8"/>
<dbReference type="OMA" id="QCQMKEV"/>
<dbReference type="OrthoDB" id="366390at2759"/>
<dbReference type="PAN-GO" id="Q9UPS8">
    <property type="GO annotations" value="0 GO annotations based on evolutionary models"/>
</dbReference>
<dbReference type="PhylomeDB" id="Q9UPS8"/>
<dbReference type="TreeFam" id="TF333496"/>
<dbReference type="PathwayCommons" id="Q9UPS8"/>
<dbReference type="Reactome" id="R-HSA-9696264">
    <property type="pathway name" value="RND3 GTPase cycle"/>
</dbReference>
<dbReference type="Reactome" id="R-HSA-9696270">
    <property type="pathway name" value="RND2 GTPase cycle"/>
</dbReference>
<dbReference type="Reactome" id="R-HSA-9696273">
    <property type="pathway name" value="RND1 GTPase cycle"/>
</dbReference>
<dbReference type="SignaLink" id="Q9UPS8"/>
<dbReference type="SIGNOR" id="Q9UPS8"/>
<dbReference type="BioGRID-ORCS" id="22852">
    <property type="hits" value="8 hits in 1160 CRISPR screens"/>
</dbReference>
<dbReference type="CD-CODE" id="8C2F96ED">
    <property type="entry name" value="Centrosome"/>
</dbReference>
<dbReference type="ChiTaRS" id="ANKRD26">
    <property type="organism name" value="human"/>
</dbReference>
<dbReference type="GeneWiki" id="ANKRD26"/>
<dbReference type="GenomeRNAi" id="22852"/>
<dbReference type="Pharos" id="Q9UPS8">
    <property type="development level" value="Tbio"/>
</dbReference>
<dbReference type="PRO" id="PR:Q9UPS8"/>
<dbReference type="Proteomes" id="UP000005640">
    <property type="component" value="Chromosome 10"/>
</dbReference>
<dbReference type="RNAct" id="Q9UPS8">
    <property type="molecule type" value="protein"/>
</dbReference>
<dbReference type="Bgee" id="ENSG00000107890">
    <property type="expression patterns" value="Expressed in male germ line stem cell (sensu Vertebrata) in testis and 126 other cell types or tissues"/>
</dbReference>
<dbReference type="ExpressionAtlas" id="Q9UPS8">
    <property type="expression patterns" value="baseline and differential"/>
</dbReference>
<dbReference type="GO" id="GO:0005813">
    <property type="term" value="C:centrosome"/>
    <property type="evidence" value="ECO:0000314"/>
    <property type="project" value="UniProtKB"/>
</dbReference>
<dbReference type="GO" id="GO:0045599">
    <property type="term" value="P:negative regulation of fat cell differentiation"/>
    <property type="evidence" value="ECO:0000250"/>
    <property type="project" value="UniProtKB"/>
</dbReference>
<dbReference type="FunFam" id="1.25.40.20:FF:000208">
    <property type="entry name" value="Ankyrin repeat domain-containing protein 26"/>
    <property type="match status" value="1"/>
</dbReference>
<dbReference type="FunFam" id="1.25.40.20:FF:000317">
    <property type="entry name" value="Ankyrin repeat domain-containing protein 26"/>
    <property type="match status" value="1"/>
</dbReference>
<dbReference type="Gene3D" id="1.25.40.20">
    <property type="entry name" value="Ankyrin repeat-containing domain"/>
    <property type="match status" value="2"/>
</dbReference>
<dbReference type="InterPro" id="IPR050657">
    <property type="entry name" value="Ankyrin_repeat_domain"/>
</dbReference>
<dbReference type="InterPro" id="IPR002110">
    <property type="entry name" value="Ankyrin_rpt"/>
</dbReference>
<dbReference type="InterPro" id="IPR036770">
    <property type="entry name" value="Ankyrin_rpt-contain_sf"/>
</dbReference>
<dbReference type="InterPro" id="IPR039497">
    <property type="entry name" value="CC144C-like_CC_dom"/>
</dbReference>
<dbReference type="InterPro" id="IPR021885">
    <property type="entry name" value="DUF3496"/>
</dbReference>
<dbReference type="PANTHER" id="PTHR24147">
    <property type="entry name" value="ANKYRIN REPEAT DOMAIN 36-RELATED"/>
    <property type="match status" value="1"/>
</dbReference>
<dbReference type="PANTHER" id="PTHR24147:SF60">
    <property type="entry name" value="ANKYRIN REPEAT DOMAIN-CONTAINING PROTEIN 26-RELATED"/>
    <property type="match status" value="1"/>
</dbReference>
<dbReference type="Pfam" id="PF00023">
    <property type="entry name" value="Ank"/>
    <property type="match status" value="2"/>
</dbReference>
<dbReference type="Pfam" id="PF12796">
    <property type="entry name" value="Ank_2"/>
    <property type="match status" value="1"/>
</dbReference>
<dbReference type="Pfam" id="PF14915">
    <property type="entry name" value="CCDC144C"/>
    <property type="match status" value="1"/>
</dbReference>
<dbReference type="Pfam" id="PF12001">
    <property type="entry name" value="DUF3496"/>
    <property type="match status" value="1"/>
</dbReference>
<dbReference type="PRINTS" id="PR01415">
    <property type="entry name" value="ANKYRIN"/>
</dbReference>
<dbReference type="SMART" id="SM00248">
    <property type="entry name" value="ANK"/>
    <property type="match status" value="4"/>
</dbReference>
<dbReference type="SUPFAM" id="SSF48403">
    <property type="entry name" value="Ankyrin repeat"/>
    <property type="match status" value="1"/>
</dbReference>
<dbReference type="SUPFAM" id="SSF57997">
    <property type="entry name" value="Tropomyosin"/>
    <property type="match status" value="1"/>
</dbReference>
<dbReference type="PROSITE" id="PS50297">
    <property type="entry name" value="ANK_REP_REGION"/>
    <property type="match status" value="1"/>
</dbReference>
<dbReference type="PROSITE" id="PS50088">
    <property type="entry name" value="ANK_REPEAT"/>
    <property type="match status" value="4"/>
</dbReference>
<name>ANR26_HUMAN</name>
<accession>Q9UPS8</accession>
<accession>A6NH29</accession>
<accession>Q2TAZ3</accession>
<accession>Q6ZR14</accession>
<accession>Q9H1Q1</accession>
<accession>Q9NSK9</accession>
<accession>Q9NTD5</accession>
<accession>Q9NW69</accession>
<organism>
    <name type="scientific">Homo sapiens</name>
    <name type="common">Human</name>
    <dbReference type="NCBI Taxonomy" id="9606"/>
    <lineage>
        <taxon>Eukaryota</taxon>
        <taxon>Metazoa</taxon>
        <taxon>Chordata</taxon>
        <taxon>Craniata</taxon>
        <taxon>Vertebrata</taxon>
        <taxon>Euteleostomi</taxon>
        <taxon>Mammalia</taxon>
        <taxon>Eutheria</taxon>
        <taxon>Euarchontoglires</taxon>
        <taxon>Primates</taxon>
        <taxon>Haplorrhini</taxon>
        <taxon>Catarrhini</taxon>
        <taxon>Hominidae</taxon>
        <taxon>Homo</taxon>
    </lineage>
</organism>
<protein>
    <recommendedName>
        <fullName evidence="9">Ankyrin repeat domain-containing protein 26</fullName>
    </recommendedName>
</protein>
<feature type="chain" id="PRO_0000240843" description="Ankyrin repeat domain-containing protein 26">
    <location>
        <begin position="1"/>
        <end position="1710"/>
    </location>
</feature>
<feature type="repeat" description="ANK 1">
    <location>
        <begin position="45"/>
        <end position="75"/>
    </location>
</feature>
<feature type="repeat" description="ANK 2">
    <location>
        <begin position="79"/>
        <end position="108"/>
    </location>
</feature>
<feature type="repeat" description="ANK 3">
    <location>
        <begin position="112"/>
        <end position="141"/>
    </location>
</feature>
<feature type="repeat" description="ANK 4">
    <location>
        <begin position="145"/>
        <end position="174"/>
    </location>
</feature>
<feature type="repeat" description="ANK 5">
    <location>
        <begin position="178"/>
        <end position="207"/>
    </location>
</feature>
<feature type="region of interest" description="Disordered" evidence="3">
    <location>
        <begin position="1"/>
        <end position="41"/>
    </location>
</feature>
<feature type="region of interest" description="Disordered" evidence="3">
    <location>
        <begin position="222"/>
        <end position="274"/>
    </location>
</feature>
<feature type="region of interest" description="Disordered" evidence="3">
    <location>
        <begin position="504"/>
        <end position="630"/>
    </location>
</feature>
<feature type="region of interest" description="Disordered" evidence="3">
    <location>
        <begin position="650"/>
        <end position="698"/>
    </location>
</feature>
<feature type="region of interest" description="Disordered" evidence="3">
    <location>
        <begin position="892"/>
        <end position="912"/>
    </location>
</feature>
<feature type="coiled-coil region" evidence="2">
    <location>
        <begin position="529"/>
        <end position="566"/>
    </location>
</feature>
<feature type="coiled-coil region" evidence="2">
    <location>
        <begin position="743"/>
        <end position="873"/>
    </location>
</feature>
<feature type="coiled-coil region" evidence="2">
    <location>
        <begin position="905"/>
        <end position="1472"/>
    </location>
</feature>
<feature type="coiled-coil region" evidence="2">
    <location>
        <begin position="1517"/>
        <end position="1587"/>
    </location>
</feature>
<feature type="coiled-coil region" evidence="2">
    <location>
        <begin position="1649"/>
        <end position="1674"/>
    </location>
</feature>
<feature type="compositionally biased region" description="Acidic residues" evidence="3">
    <location>
        <begin position="569"/>
        <end position="580"/>
    </location>
</feature>
<feature type="compositionally biased region" description="Basic and acidic residues" evidence="3">
    <location>
        <begin position="586"/>
        <end position="602"/>
    </location>
</feature>
<feature type="compositionally biased region" description="Basic and acidic residues" evidence="3">
    <location>
        <begin position="613"/>
        <end position="626"/>
    </location>
</feature>
<feature type="compositionally biased region" description="Acidic residues" evidence="3">
    <location>
        <begin position="650"/>
        <end position="660"/>
    </location>
</feature>
<feature type="compositionally biased region" description="Basic and acidic residues" evidence="3">
    <location>
        <begin position="661"/>
        <end position="673"/>
    </location>
</feature>
<feature type="modified residue" description="Phosphoserine" evidence="11">
    <location>
        <position position="11"/>
    </location>
</feature>
<feature type="modified residue" description="Phosphoserine" evidence="11">
    <location>
        <position position="15"/>
    </location>
</feature>
<feature type="modified residue" description="Phosphoserine" evidence="1">
    <location>
        <position position="241"/>
    </location>
</feature>
<feature type="modified residue" description="Phosphoserine" evidence="11">
    <location>
        <position position="261"/>
    </location>
</feature>
<feature type="modified residue" description="Phosphoserine" evidence="11">
    <location>
        <position position="489"/>
    </location>
</feature>
<feature type="modified residue" description="Phosphoserine" evidence="11">
    <location>
        <position position="530"/>
    </location>
</feature>
<feature type="modified residue" description="Phosphoserine" evidence="11">
    <location>
        <position position="631"/>
    </location>
</feature>
<feature type="splice variant" id="VSP_019434" description="In isoform 2." evidence="8">
    <location>
        <begin position="1"/>
        <end position="443"/>
    </location>
</feature>
<feature type="splice variant" id="VSP_019435" description="In isoform 2." evidence="8">
    <original>KEKNIGNEQAEDVFYIPSCMSGSRNFKMAKLEDTRNVGMPVAHMESPERYLHLKPTIEMKDSVPNKAGGMKDVQTSKAAEHDLEVASEEEQEREGSENNQPQ</original>
    <variation>MNHMFHIKRHSISAGTDAYKKTKPIQNLFQKPLYDHCSANNYKSMEPELENVRSSPPRGDRTSKVSLKEELQQDMQRFKNEIGMLKVEFQALEKEKVQLQKE</variation>
    <location>
        <begin position="444"/>
        <end position="545"/>
    </location>
</feature>
<feature type="sequence variant" id="VAR_026833" description="In dbSNP:rs7897309." evidence="4 5">
    <original>Q</original>
    <variation>R</variation>
    <location>
        <position position="20"/>
    </location>
</feature>
<feature type="sequence variant" id="VAR_055513" description="In dbSNP:rs12359281.">
    <original>I</original>
    <variation>V</variation>
    <location>
        <position position="425"/>
    </location>
</feature>
<feature type="sequence variant" id="VAR_080646" description="In dbSNP:rs564681878." evidence="5">
    <location>
        <position position="606"/>
    </location>
</feature>
<feature type="sequence variant" id="VAR_055514" description="In dbSNP:rs12572862.">
    <original>V</original>
    <variation>L</variation>
    <location>
        <position position="1220"/>
    </location>
</feature>
<feature type="sequence variant" id="VAR_026834" description="In dbSNP:rs10829163." evidence="5">
    <original>V</original>
    <variation>I</variation>
    <location>
        <position position="1305"/>
    </location>
</feature>
<feature type="sequence variant" id="VAR_026835" description="In dbSNP:rs2274741." evidence="5">
    <original>F</original>
    <variation>L</variation>
    <location>
        <position position="1514"/>
    </location>
</feature>
<feature type="sequence conflict" description="In Ref. 3; BAC87508." evidence="9" ref="3">
    <original>D</original>
    <variation>G</variation>
    <location>
        <position position="1347"/>
    </location>
</feature>
<feature type="sequence conflict" description="In Ref. 3; BAC87508." evidence="9" ref="3">
    <original>NNFASMK</original>
    <variation>KQDLPDS</variation>
    <location>
        <begin position="1517"/>
        <end position="1523"/>
    </location>
</feature>
<reference key="1">
    <citation type="journal article" date="1999" name="DNA Res.">
        <title>Prediction of the coding sequences of unidentified human genes. XIV. The complete sequences of 100 new cDNA clones from brain which code for large proteins in vitro.</title>
        <authorList>
            <person name="Kikuno R."/>
            <person name="Nagase T."/>
            <person name="Ishikawa K."/>
            <person name="Hirosawa M."/>
            <person name="Miyajima N."/>
            <person name="Tanaka A."/>
            <person name="Kotani H."/>
            <person name="Nomura N."/>
            <person name="Ohara O."/>
        </authorList>
    </citation>
    <scope>NUCLEOTIDE SEQUENCE [LARGE SCALE MRNA] (ISOFORM 1)</scope>
    <scope>VARIANT ARG-20</scope>
    <source>
        <tissue>Brain</tissue>
    </source>
</reference>
<reference key="2">
    <citation type="journal article" date="2004" name="Nature">
        <title>The DNA sequence and comparative analysis of human chromosome 10.</title>
        <authorList>
            <person name="Deloukas P."/>
            <person name="Earthrowl M.E."/>
            <person name="Grafham D.V."/>
            <person name="Rubenfield M."/>
            <person name="French L."/>
            <person name="Steward C.A."/>
            <person name="Sims S.K."/>
            <person name="Jones M.C."/>
            <person name="Searle S."/>
            <person name="Scott C."/>
            <person name="Howe K."/>
            <person name="Hunt S.E."/>
            <person name="Andrews T.D."/>
            <person name="Gilbert J.G.R."/>
            <person name="Swarbreck D."/>
            <person name="Ashurst J.L."/>
            <person name="Taylor A."/>
            <person name="Battles J."/>
            <person name="Bird C.P."/>
            <person name="Ainscough R."/>
            <person name="Almeida J.P."/>
            <person name="Ashwell R.I.S."/>
            <person name="Ambrose K.D."/>
            <person name="Babbage A.K."/>
            <person name="Bagguley C.L."/>
            <person name="Bailey J."/>
            <person name="Banerjee R."/>
            <person name="Bates K."/>
            <person name="Beasley H."/>
            <person name="Bray-Allen S."/>
            <person name="Brown A.J."/>
            <person name="Brown J.Y."/>
            <person name="Burford D.C."/>
            <person name="Burrill W."/>
            <person name="Burton J."/>
            <person name="Cahill P."/>
            <person name="Camire D."/>
            <person name="Carter N.P."/>
            <person name="Chapman J.C."/>
            <person name="Clark S.Y."/>
            <person name="Clarke G."/>
            <person name="Clee C.M."/>
            <person name="Clegg S."/>
            <person name="Corby N."/>
            <person name="Coulson A."/>
            <person name="Dhami P."/>
            <person name="Dutta I."/>
            <person name="Dunn M."/>
            <person name="Faulkner L."/>
            <person name="Frankish A."/>
            <person name="Frankland J.A."/>
            <person name="Garner P."/>
            <person name="Garnett J."/>
            <person name="Gribble S."/>
            <person name="Griffiths C."/>
            <person name="Grocock R."/>
            <person name="Gustafson E."/>
            <person name="Hammond S."/>
            <person name="Harley J.L."/>
            <person name="Hart E."/>
            <person name="Heath P.D."/>
            <person name="Ho T.P."/>
            <person name="Hopkins B."/>
            <person name="Horne J."/>
            <person name="Howden P.J."/>
            <person name="Huckle E."/>
            <person name="Hynds C."/>
            <person name="Johnson C."/>
            <person name="Johnson D."/>
            <person name="Kana A."/>
            <person name="Kay M."/>
            <person name="Kimberley A.M."/>
            <person name="Kershaw J.K."/>
            <person name="Kokkinaki M."/>
            <person name="Laird G.K."/>
            <person name="Lawlor S."/>
            <person name="Lee H.M."/>
            <person name="Leongamornlert D.A."/>
            <person name="Laird G."/>
            <person name="Lloyd C."/>
            <person name="Lloyd D.M."/>
            <person name="Loveland J."/>
            <person name="Lovell J."/>
            <person name="McLaren S."/>
            <person name="McLay K.E."/>
            <person name="McMurray A."/>
            <person name="Mashreghi-Mohammadi M."/>
            <person name="Matthews L."/>
            <person name="Milne S."/>
            <person name="Nickerson T."/>
            <person name="Nguyen M."/>
            <person name="Overton-Larty E."/>
            <person name="Palmer S.A."/>
            <person name="Pearce A.V."/>
            <person name="Peck A.I."/>
            <person name="Pelan S."/>
            <person name="Phillimore B."/>
            <person name="Porter K."/>
            <person name="Rice C.M."/>
            <person name="Rogosin A."/>
            <person name="Ross M.T."/>
            <person name="Sarafidou T."/>
            <person name="Sehra H.K."/>
            <person name="Shownkeen R."/>
            <person name="Skuce C.D."/>
            <person name="Smith M."/>
            <person name="Standring L."/>
            <person name="Sycamore N."/>
            <person name="Tester J."/>
            <person name="Thorpe A."/>
            <person name="Torcasso W."/>
            <person name="Tracey A."/>
            <person name="Tromans A."/>
            <person name="Tsolas J."/>
            <person name="Wall M."/>
            <person name="Walsh J."/>
            <person name="Wang H."/>
            <person name="Weinstock K."/>
            <person name="West A.P."/>
            <person name="Willey D.L."/>
            <person name="Whitehead S.L."/>
            <person name="Wilming L."/>
            <person name="Wray P.W."/>
            <person name="Young L."/>
            <person name="Chen Y."/>
            <person name="Lovering R.C."/>
            <person name="Moschonas N.K."/>
            <person name="Siebert R."/>
            <person name="Fechtel K."/>
            <person name="Bentley D."/>
            <person name="Durbin R.M."/>
            <person name="Hubbard T."/>
            <person name="Doucette-Stamm L."/>
            <person name="Beck S."/>
            <person name="Smith D.R."/>
            <person name="Rogers J."/>
        </authorList>
    </citation>
    <scope>NUCLEOTIDE SEQUENCE [LARGE SCALE GENOMIC DNA]</scope>
</reference>
<reference key="3">
    <citation type="journal article" date="2004" name="Nat. Genet.">
        <title>Complete sequencing and characterization of 21,243 full-length human cDNAs.</title>
        <authorList>
            <person name="Ota T."/>
            <person name="Suzuki Y."/>
            <person name="Nishikawa T."/>
            <person name="Otsuki T."/>
            <person name="Sugiyama T."/>
            <person name="Irie R."/>
            <person name="Wakamatsu A."/>
            <person name="Hayashi K."/>
            <person name="Sato H."/>
            <person name="Nagai K."/>
            <person name="Kimura K."/>
            <person name="Makita H."/>
            <person name="Sekine M."/>
            <person name="Obayashi M."/>
            <person name="Nishi T."/>
            <person name="Shibahara T."/>
            <person name="Tanaka T."/>
            <person name="Ishii S."/>
            <person name="Yamamoto J."/>
            <person name="Saito K."/>
            <person name="Kawai Y."/>
            <person name="Isono Y."/>
            <person name="Nakamura Y."/>
            <person name="Nagahari K."/>
            <person name="Murakami K."/>
            <person name="Yasuda T."/>
            <person name="Iwayanagi T."/>
            <person name="Wagatsuma M."/>
            <person name="Shiratori A."/>
            <person name="Sudo H."/>
            <person name="Hosoiri T."/>
            <person name="Kaku Y."/>
            <person name="Kodaira H."/>
            <person name="Kondo H."/>
            <person name="Sugawara M."/>
            <person name="Takahashi M."/>
            <person name="Kanda K."/>
            <person name="Yokoi T."/>
            <person name="Furuya T."/>
            <person name="Kikkawa E."/>
            <person name="Omura Y."/>
            <person name="Abe K."/>
            <person name="Kamihara K."/>
            <person name="Katsuta N."/>
            <person name="Sato K."/>
            <person name="Tanikawa M."/>
            <person name="Yamazaki M."/>
            <person name="Ninomiya K."/>
            <person name="Ishibashi T."/>
            <person name="Yamashita H."/>
            <person name="Murakawa K."/>
            <person name="Fujimori K."/>
            <person name="Tanai H."/>
            <person name="Kimata M."/>
            <person name="Watanabe M."/>
            <person name="Hiraoka S."/>
            <person name="Chiba Y."/>
            <person name="Ishida S."/>
            <person name="Ono Y."/>
            <person name="Takiguchi S."/>
            <person name="Watanabe S."/>
            <person name="Yosida M."/>
            <person name="Hotuta T."/>
            <person name="Kusano J."/>
            <person name="Kanehori K."/>
            <person name="Takahashi-Fujii A."/>
            <person name="Hara H."/>
            <person name="Tanase T.-O."/>
            <person name="Nomura Y."/>
            <person name="Togiya S."/>
            <person name="Komai F."/>
            <person name="Hara R."/>
            <person name="Takeuchi K."/>
            <person name="Arita M."/>
            <person name="Imose N."/>
            <person name="Musashino K."/>
            <person name="Yuuki H."/>
            <person name="Oshima A."/>
            <person name="Sasaki N."/>
            <person name="Aotsuka S."/>
            <person name="Yoshikawa Y."/>
            <person name="Matsunawa H."/>
            <person name="Ichihara T."/>
            <person name="Shiohata N."/>
            <person name="Sano S."/>
            <person name="Moriya S."/>
            <person name="Momiyama H."/>
            <person name="Satoh N."/>
            <person name="Takami S."/>
            <person name="Terashima Y."/>
            <person name="Suzuki O."/>
            <person name="Nakagawa S."/>
            <person name="Senoh A."/>
            <person name="Mizoguchi H."/>
            <person name="Goto Y."/>
            <person name="Shimizu F."/>
            <person name="Wakebe H."/>
            <person name="Hishigaki H."/>
            <person name="Watanabe T."/>
            <person name="Sugiyama A."/>
            <person name="Takemoto M."/>
            <person name="Kawakami B."/>
            <person name="Yamazaki M."/>
            <person name="Watanabe K."/>
            <person name="Kumagai A."/>
            <person name="Itakura S."/>
            <person name="Fukuzumi Y."/>
            <person name="Fujimori Y."/>
            <person name="Komiyama M."/>
            <person name="Tashiro H."/>
            <person name="Tanigami A."/>
            <person name="Fujiwara T."/>
            <person name="Ono T."/>
            <person name="Yamada K."/>
            <person name="Fujii Y."/>
            <person name="Ozaki K."/>
            <person name="Hirao M."/>
            <person name="Ohmori Y."/>
            <person name="Kawabata A."/>
            <person name="Hikiji T."/>
            <person name="Kobatake N."/>
            <person name="Inagaki H."/>
            <person name="Ikema Y."/>
            <person name="Okamoto S."/>
            <person name="Okitani R."/>
            <person name="Kawakami T."/>
            <person name="Noguchi S."/>
            <person name="Itoh T."/>
            <person name="Shigeta K."/>
            <person name="Senba T."/>
            <person name="Matsumura K."/>
            <person name="Nakajima Y."/>
            <person name="Mizuno T."/>
            <person name="Morinaga M."/>
            <person name="Sasaki M."/>
            <person name="Togashi T."/>
            <person name="Oyama M."/>
            <person name="Hata H."/>
            <person name="Watanabe M."/>
            <person name="Komatsu T."/>
            <person name="Mizushima-Sugano J."/>
            <person name="Satoh T."/>
            <person name="Shirai Y."/>
            <person name="Takahashi Y."/>
            <person name="Nakagawa K."/>
            <person name="Okumura K."/>
            <person name="Nagase T."/>
            <person name="Nomura N."/>
            <person name="Kikuchi H."/>
            <person name="Masuho Y."/>
            <person name="Yamashita R."/>
            <person name="Nakai K."/>
            <person name="Yada T."/>
            <person name="Nakamura Y."/>
            <person name="Ohara O."/>
            <person name="Isogai T."/>
            <person name="Sugano S."/>
        </authorList>
    </citation>
    <scope>NUCLEOTIDE SEQUENCE [LARGE SCALE MRNA] OF 1-1522 (ISOFORM 2)</scope>
    <scope>NUCLEOTIDE SEQUENCE [LARGE SCALE MRNA] OF 1-546 (ISOFORM 1)</scope>
    <scope>VARIANTS ARG-20; SER-606 DEL; ILE-1305 AND LEU-1514</scope>
    <source>
        <tissue>Embryo</tissue>
        <tissue>Trachea</tissue>
    </source>
</reference>
<reference key="4">
    <citation type="journal article" date="2007" name="BMC Genomics">
        <title>The full-ORF clone resource of the German cDNA consortium.</title>
        <authorList>
            <person name="Bechtel S."/>
            <person name="Rosenfelder H."/>
            <person name="Duda A."/>
            <person name="Schmidt C.P."/>
            <person name="Ernst U."/>
            <person name="Wellenreuther R."/>
            <person name="Mehrle A."/>
            <person name="Schuster C."/>
            <person name="Bahr A."/>
            <person name="Bloecker H."/>
            <person name="Heubner D."/>
            <person name="Hoerlein A."/>
            <person name="Michel G."/>
            <person name="Wedler H."/>
            <person name="Koehrer K."/>
            <person name="Ottenwaelder B."/>
            <person name="Poustka A."/>
            <person name="Wiemann S."/>
            <person name="Schupp I."/>
        </authorList>
    </citation>
    <scope>NUCLEOTIDE SEQUENCE [LARGE SCALE MRNA] OF 1338-1710</scope>
    <source>
        <tissue>Melanoma</tissue>
        <tissue>Testis</tissue>
    </source>
</reference>
<reference key="5">
    <citation type="journal article" date="2004" name="Genome Res.">
        <title>The status, quality, and expansion of the NIH full-length cDNA project: the Mammalian Gene Collection (MGC).</title>
        <authorList>
            <consortium name="The MGC Project Team"/>
        </authorList>
    </citation>
    <scope>NUCLEOTIDE SEQUENCE [LARGE SCALE MRNA] OF 1546-1710</scope>
    <source>
        <tissue>Lymph</tissue>
    </source>
</reference>
<reference key="6">
    <citation type="journal article" date="2003" name="Nature">
        <title>Proteomic characterization of the human centrosome by protein correlation profiling.</title>
        <authorList>
            <person name="Andersen J.S."/>
            <person name="Wilkinson C.J."/>
            <person name="Mayor T."/>
            <person name="Mortensen P."/>
            <person name="Nigg E.A."/>
            <person name="Mann M."/>
        </authorList>
    </citation>
    <scope>IDENTIFICATION BY MASS SPECTROMETRY</scope>
    <source>
        <tissue>Lymphoblast</tissue>
    </source>
</reference>
<reference key="7">
    <citation type="journal article" date="2006" name="Gene">
        <title>Duplication and extensive remodeling shaped POTE family genes encoding proteins containing ankyrin repeat and coiled coil domains.</title>
        <authorList>
            <person name="Hahn Y."/>
            <person name="Bera T.K."/>
            <person name="Pastan I.H."/>
            <person name="Lee B."/>
        </authorList>
    </citation>
    <scope>IDENTIFICATION</scope>
</reference>
<reference key="8">
    <citation type="journal article" date="2007" name="Science">
        <title>ATM and ATR substrate analysis reveals extensive protein networks responsive to DNA damage.</title>
        <authorList>
            <person name="Matsuoka S."/>
            <person name="Ballif B.A."/>
            <person name="Smogorzewska A."/>
            <person name="McDonald E.R. III"/>
            <person name="Hurov K.E."/>
            <person name="Luo J."/>
            <person name="Bakalarski C.E."/>
            <person name="Zhao Z."/>
            <person name="Solimini N."/>
            <person name="Lerenthal Y."/>
            <person name="Shiloh Y."/>
            <person name="Gygi S.P."/>
            <person name="Elledge S.J."/>
        </authorList>
    </citation>
    <scope>IDENTIFICATION BY MASS SPECTROMETRY [LARGE SCALE ANALYSIS]</scope>
    <source>
        <tissue>Embryonic kidney</tissue>
    </source>
</reference>
<reference key="9">
    <citation type="journal article" date="2008" name="Proc. Natl. Acad. Sci. U.S.A.">
        <title>A quantitative atlas of mitotic phosphorylation.</title>
        <authorList>
            <person name="Dephoure N."/>
            <person name="Zhou C."/>
            <person name="Villen J."/>
            <person name="Beausoleil S.A."/>
            <person name="Bakalarski C.E."/>
            <person name="Elledge S.J."/>
            <person name="Gygi S.P."/>
        </authorList>
    </citation>
    <scope>IDENTIFICATION BY MASS SPECTROMETRY [LARGE SCALE ANALYSIS]</scope>
    <source>
        <tissue>Cervix carcinoma</tissue>
    </source>
</reference>
<reference key="10">
    <citation type="journal article" date="2011" name="Am. J. Hum. Genet.">
        <title>Mutations in the 5' UTR of ANKRD26, the ankirin repeat domain 26 gene, cause an autosomal-dominant form of inherited thrombocytopenia, THC2.</title>
        <authorList>
            <person name="Pippucci T."/>
            <person name="Savoia A."/>
            <person name="Perrotta S."/>
            <person name="Pujol-Moix N."/>
            <person name="Noris P."/>
            <person name="Castegnaro G."/>
            <person name="Pecci A."/>
            <person name="Gnan C."/>
            <person name="Punzo F."/>
            <person name="Marconi C."/>
            <person name="Gherardi S."/>
            <person name="Loffredo G."/>
            <person name="De Rocco D."/>
            <person name="Scianguetta S."/>
            <person name="Barozzi S."/>
            <person name="Magini P."/>
            <person name="Bozzi V."/>
            <person name="Dezzani L."/>
            <person name="Di Stazio M."/>
            <person name="Ferraro M."/>
            <person name="Perini G."/>
            <person name="Seri M."/>
            <person name="Balduini C.L."/>
        </authorList>
    </citation>
    <scope>INVOLVEMENT IN THC2</scope>
</reference>
<reference key="11">
    <citation type="journal article" date="2012" name="PLoS ONE">
        <title>ANKRD26 and its interacting partners TRIO, GPS2, HMMR and DIPA regulate adipogenesis in 3T3-L1 cells.</title>
        <authorList>
            <person name="Liu X.F."/>
            <person name="Bera T.K."/>
            <person name="Kahue C."/>
            <person name="Escobar T."/>
            <person name="Fei Z."/>
            <person name="Raciti G.A."/>
            <person name="Pastan I."/>
        </authorList>
    </citation>
    <scope>INTERACTION WITH TRIO; CCDC85B; GPS2 AND HMMR</scope>
</reference>
<reference key="12">
    <citation type="journal article" date="2013" name="J. Proteome Res.">
        <title>Toward a comprehensive characterization of a human cancer cell phosphoproteome.</title>
        <authorList>
            <person name="Zhou H."/>
            <person name="Di Palma S."/>
            <person name="Preisinger C."/>
            <person name="Peng M."/>
            <person name="Polat A.N."/>
            <person name="Heck A.J."/>
            <person name="Mohammed S."/>
        </authorList>
    </citation>
    <scope>PHOSPHORYLATION [LARGE SCALE ANALYSIS] AT SER-11; SER-15; SER-261; SER-489; SER-530 AND SER-631</scope>
    <scope>IDENTIFICATION BY MASS SPECTROMETRY [LARGE SCALE ANALYSIS]</scope>
    <source>
        <tissue>Cervix carcinoma</tissue>
        <tissue>Erythroleukemia</tissue>
    </source>
</reference>
<keyword id="KW-0025">Alternative splicing</keyword>
<keyword id="KW-0040">ANK repeat</keyword>
<keyword id="KW-0175">Coiled coil</keyword>
<keyword id="KW-0597">Phosphoprotein</keyword>
<keyword id="KW-1267">Proteomics identification</keyword>
<keyword id="KW-1185">Reference proteome</keyword>
<keyword id="KW-0677">Repeat</keyword>
<evidence type="ECO:0000250" key="1">
    <source>
        <dbReference type="UniProtKB" id="Q811D2"/>
    </source>
</evidence>
<evidence type="ECO:0000255" key="2"/>
<evidence type="ECO:0000256" key="3">
    <source>
        <dbReference type="SAM" id="MobiDB-lite"/>
    </source>
</evidence>
<evidence type="ECO:0000269" key="4">
    <source>
    </source>
</evidence>
<evidence type="ECO:0000269" key="5">
    <source>
    </source>
</evidence>
<evidence type="ECO:0000269" key="6">
    <source>
    </source>
</evidence>
<evidence type="ECO:0000269" key="7">
    <source>
    </source>
</evidence>
<evidence type="ECO:0000303" key="8">
    <source>
    </source>
</evidence>
<evidence type="ECO:0000305" key="9"/>
<evidence type="ECO:0000312" key="10">
    <source>
        <dbReference type="HGNC" id="HGNC:29186"/>
    </source>
</evidence>
<evidence type="ECO:0007744" key="11">
    <source>
    </source>
</evidence>
<proteinExistence type="evidence at protein level"/>
<comment type="function">
    <text evidence="1">Acts as a regulator of adipogenesis. Involved in the regulation of the feeding behavior.</text>
</comment>
<comment type="subunit">
    <text evidence="7">Interacts with TRIO (PubMed:22666460). Interacts with GPS2 (PubMed:22666460). Interacts with CCDC85B (PubMed:22666460). Interacts with HMMR (PubMed:22666460).</text>
</comment>
<comment type="alternative products">
    <event type="alternative splicing"/>
    <isoform>
        <id>Q9UPS8-1</id>
        <name>1</name>
        <sequence type="displayed"/>
    </isoform>
    <isoform>
        <id>Q9UPS8-2</id>
        <name>2</name>
        <sequence type="described" ref="VSP_019434 VSP_019435"/>
    </isoform>
</comment>
<comment type="disease" evidence="6">
    <disease id="DI-01099">
        <name>Thrombocytopenia 2</name>
        <acronym>THC2</acronym>
        <description>A form of thrombocytopenia, a hematologic disorder defined by a decrease in the number of platelets in circulating blood, resulting in the potential for increased bleeding and decreased ability for clotting.</description>
        <dbReference type="MIM" id="188000"/>
    </disease>
    <text>The disease is caused by variants affecting the gene represented in this entry.</text>
</comment>
<comment type="sequence caution" evidence="9">
    <conflict type="erroneous initiation">
        <sequence resource="EMBL-CDS" id="BAA83026"/>
    </conflict>
    <text>Extended N-terminus.</text>
</comment>
<sequence>MKKIFSKKGESPLGSFARRQRSSAGGGGEPGEGAYSQPGYHVRDRDLGKIHKAASAGNVAKVQQILLLRKNGLNDRDKMNRTALHLACANGHPEVVTLLVDRKCQLNVCDNENRTALMKAVQCQEEKCATILLEHGADPNLADVHGNTALHYAVYNEDISVATKLLLYDANIEAKNKDDLTPLLLAVSGKKQQMVEFLIKKKANVNAVDKLESSHQLISEYKEERIPKHSSQNSNSVDESSEDSLSRLSGKPGVDDSWPTSDDEDLNFDTKNVPKPSLAKLMTASQQSRKNLEATYGTVRTGNRTLFEDRDSDSQDEVVVESLPTTSIKVQCFSHPTYQSPDLLPKPSHKSLANPGLMKEEPTKPGIAKKENGIDIIESAPLEQTNNDNLTYVDEVHKNNRSDMMSALGLGQEEDIESPWDSESISENFPQKYVDPLAGAADGKEKNIGNEQAEDVFYIPSCMSGSRNFKMAKLEDTRNVGMPVAHMESPERYLHLKPTIEMKDSVPNKAGGMKDVQTSKAAEHDLEVASEEEQEREGSENNQPQVEEERKKHRNNEMEVSANIHDGATDDAEDDDDDDGLIQKRKSGETDHQQFPRKENKEYASSGPALQMKEVKSTEKEKRTSKESVNSPVFGKASLLTGGLLQVDDDSSLSEIDEDEGRPTKKTSNEKNKVKNQIQSMDDVDDLTQSSETASEDCELPHSSYKNFMLLIEQLGMECKDSVSLLKIQDAALSCERLLELKKNHCELLTVKIKKMEDKVNVLQRELSETKEIKSQLEHQKVEWERELCSLRFSLNQEEEKRRNADTLYEKIREQLRRKEEQYRKEVEVKQQLELSLQTLEMELRTVKSNLNQVVQERNDAQRQLSREQNARMLQDGILTNHLSKQKEIEMAQKKMNSENSHSHEEEKDLSHKNSMLQEEIAMLRLEIDTIKNQNQEKEKKCFEDLKIVKEKNEDLQKTIKQNEETLTQTISQYNGRLSVLTAENAMLNSKLENEKQSKERLEAEVESYHSRLAAAIHDRDQSETSKRELELAFQRARDECSRLQDKMNFDVSNLKDNNEILSQQLFKTESKLNSLEIEFHHTRDALREKTLGLERVQKDLSQTQCQMKEMEQKYQNEQVKVNKYIGKQESVEERLSQLQSENMLLRQQLDDAHNKADNKEKTVINIQDQFHAIVQKLQAESEKQSLLLEERNKELISECNHLKERQYQYENEKAEREVVVRQLQQELADTLKKQSMSEASLEVTSRYRINLEDETQDLKKKLGQIRNQLQEAQDRHTEAVRCAEKMQDHKQKLEKDNAKLKVTVKKQMDKIEELQKNLLNANLSEDEKEQLKKLMELKQSLECNLDQEMKKNVELEREITGFKNLLKMTRKKLNEYENGEFSFHGDLKTSQFEMDIQINKLKHKIDDLTAELETAGSKCLHLDTKNQILQEELLSMKTVQKKCEKLQKNKKKLEQEVINLRSHIERNMVELGQVKQYKQEIEERARQEIAEKLKEVNLFLQAQAASQENLEQFRENNFASMKSQMELRIKDLESELSKIKTSQEDFNKTELEKYKQLYLEELKVRKSLSSKLTKTNERLAEVNTKLLVEKQQSRSLFTTLTTRPVMEPPCVGNLNNSLDLNRKLIPRENLVISTSNPRASNNSMENYLSKMQQELEKNITRELKEAAAELESGSIASPLGSTDESNLNQDLVWKASREYVQVLKKNYMI</sequence>